<gene>
    <name type="primary">FYV10</name>
    <name type="ordered locus">KLLA0E08503g</name>
</gene>
<proteinExistence type="inferred from homology"/>
<comment type="function">
    <text evidence="1">Involved in the proteasome-dependent degradation of fructose-1,6-bisphosphatase.</text>
</comment>
<comment type="subcellular location">
    <subcellularLocation>
        <location evidence="1">Cytoplasm</location>
    </subcellularLocation>
    <subcellularLocation>
        <location evidence="1">Nucleus</location>
    </subcellularLocation>
</comment>
<comment type="similarity">
    <text evidence="4">Belongs to the FYV10 family.</text>
</comment>
<organism>
    <name type="scientific">Kluyveromyces lactis (strain ATCC 8585 / CBS 2359 / DSM 70799 / NBRC 1267 / NRRL Y-1140 / WM37)</name>
    <name type="common">Yeast</name>
    <name type="synonym">Candida sphaerica</name>
    <dbReference type="NCBI Taxonomy" id="284590"/>
    <lineage>
        <taxon>Eukaryota</taxon>
        <taxon>Fungi</taxon>
        <taxon>Dikarya</taxon>
        <taxon>Ascomycota</taxon>
        <taxon>Saccharomycotina</taxon>
        <taxon>Saccharomycetes</taxon>
        <taxon>Saccharomycetales</taxon>
        <taxon>Saccharomycetaceae</taxon>
        <taxon>Kluyveromyces</taxon>
    </lineage>
</organism>
<evidence type="ECO:0000250" key="1"/>
<evidence type="ECO:0000255" key="2">
    <source>
        <dbReference type="PROSITE-ProRule" id="PRU00058"/>
    </source>
</evidence>
<evidence type="ECO:0000255" key="3">
    <source>
        <dbReference type="PROSITE-ProRule" id="PRU01215"/>
    </source>
</evidence>
<evidence type="ECO:0000305" key="4"/>
<accession>Q6CP05</accession>
<protein>
    <recommendedName>
        <fullName>Protein FYV10</fullName>
    </recommendedName>
</protein>
<name>FYV10_KLULA</name>
<feature type="chain" id="PRO_0000292460" description="Protein FYV10">
    <location>
        <begin position="1"/>
        <end position="468"/>
    </location>
</feature>
<feature type="domain" description="CTLH" evidence="2">
    <location>
        <begin position="171"/>
        <end position="229"/>
    </location>
</feature>
<feature type="zinc finger region" description="RING-Gid-type" evidence="3">
    <location>
        <begin position="386"/>
        <end position="453"/>
    </location>
</feature>
<keyword id="KW-0963">Cytoplasm</keyword>
<keyword id="KW-0479">Metal-binding</keyword>
<keyword id="KW-0539">Nucleus</keyword>
<keyword id="KW-1185">Reference proteome</keyword>
<keyword id="KW-0862">Zinc</keyword>
<keyword id="KW-0863">Zinc-finger</keyword>
<dbReference type="EMBL" id="CR382125">
    <property type="protein sequence ID" value="CAG99421.1"/>
    <property type="molecule type" value="Genomic_DNA"/>
</dbReference>
<dbReference type="RefSeq" id="XP_454334.1">
    <property type="nucleotide sequence ID" value="XM_454334.1"/>
</dbReference>
<dbReference type="SMR" id="Q6CP05"/>
<dbReference type="FunCoup" id="Q6CP05">
    <property type="interactions" value="951"/>
</dbReference>
<dbReference type="STRING" id="284590.Q6CP05"/>
<dbReference type="PaxDb" id="284590-Q6CP05"/>
<dbReference type="KEGG" id="kla:KLLA0_E08537g"/>
<dbReference type="eggNOG" id="KOG0396">
    <property type="taxonomic scope" value="Eukaryota"/>
</dbReference>
<dbReference type="HOGENOM" id="CLU_027445_2_0_1"/>
<dbReference type="InParanoid" id="Q6CP05"/>
<dbReference type="OMA" id="ANHETAR"/>
<dbReference type="Proteomes" id="UP000000598">
    <property type="component" value="Chromosome E"/>
</dbReference>
<dbReference type="GO" id="GO:0005737">
    <property type="term" value="C:cytoplasm"/>
    <property type="evidence" value="ECO:0007669"/>
    <property type="project" value="UniProtKB-SubCell"/>
</dbReference>
<dbReference type="GO" id="GO:0034657">
    <property type="term" value="C:GID complex"/>
    <property type="evidence" value="ECO:0007669"/>
    <property type="project" value="TreeGrafter"/>
</dbReference>
<dbReference type="GO" id="GO:0005634">
    <property type="term" value="C:nucleus"/>
    <property type="evidence" value="ECO:0007669"/>
    <property type="project" value="UniProtKB-SubCell"/>
</dbReference>
<dbReference type="GO" id="GO:0061630">
    <property type="term" value="F:ubiquitin protein ligase activity"/>
    <property type="evidence" value="ECO:0007669"/>
    <property type="project" value="InterPro"/>
</dbReference>
<dbReference type="GO" id="GO:0008270">
    <property type="term" value="F:zinc ion binding"/>
    <property type="evidence" value="ECO:0007669"/>
    <property type="project" value="UniProtKB-KW"/>
</dbReference>
<dbReference type="GO" id="GO:0045721">
    <property type="term" value="P:negative regulation of gluconeogenesis"/>
    <property type="evidence" value="ECO:0007669"/>
    <property type="project" value="UniProtKB-ARBA"/>
</dbReference>
<dbReference type="GO" id="GO:0043161">
    <property type="term" value="P:proteasome-mediated ubiquitin-dependent protein catabolic process"/>
    <property type="evidence" value="ECO:0007669"/>
    <property type="project" value="InterPro"/>
</dbReference>
<dbReference type="InterPro" id="IPR024964">
    <property type="entry name" value="CTLH/CRA"/>
</dbReference>
<dbReference type="InterPro" id="IPR006595">
    <property type="entry name" value="CTLH_C"/>
</dbReference>
<dbReference type="InterPro" id="IPR045098">
    <property type="entry name" value="Fyv10_fam"/>
</dbReference>
<dbReference type="InterPro" id="IPR044063">
    <property type="entry name" value="ZF_RING_GID"/>
</dbReference>
<dbReference type="PANTHER" id="PTHR12170:SF2">
    <property type="entry name" value="E3 UBIQUITIN-PROTEIN TRANSFERASE MAEA"/>
    <property type="match status" value="1"/>
</dbReference>
<dbReference type="PANTHER" id="PTHR12170">
    <property type="entry name" value="MACROPHAGE ERYTHROBLAST ATTACHER-RELATED"/>
    <property type="match status" value="1"/>
</dbReference>
<dbReference type="Pfam" id="PF10607">
    <property type="entry name" value="CTLH"/>
    <property type="match status" value="1"/>
</dbReference>
<dbReference type="SMART" id="SM00668">
    <property type="entry name" value="CTLH"/>
    <property type="match status" value="1"/>
</dbReference>
<dbReference type="PROSITE" id="PS50897">
    <property type="entry name" value="CTLH"/>
    <property type="match status" value="1"/>
</dbReference>
<dbReference type="PROSITE" id="PS51867">
    <property type="entry name" value="ZF_RING_GID"/>
    <property type="match status" value="1"/>
</dbReference>
<sequence length="468" mass="54712">MTSLNEPNVDFHLKLNQQQFNIPSELLKRNWDKFNNLYTSYSVELQGQFATLNTLLEDPNKDEQSIEKLNDIINTVNILQKRLSQLHDNELTILERIEKRVEYFKQFERFKYDSNTDKLLKWYRSYTDLLIADYLVRHGSNSIDHKNKIASNSGIEFIKTRGLEDLIDYEVLIEANQISMELIENKNLRPLLEWIENNSAHLTEKGSHLQFQALLQEYIELVRCSDYKAAIRCFQTHLAHFANIYPKELKLAAGILAFFKSCLNNGRDDEVTNEQKLFHAYFRKQMYRPHPLSSISSSNVVHNAELCRYGPLLDHERWESLNKMFLHEFYSLYKISYHDPLLIYISLGISSLKTKDCGHTISAQLIPHENPEVNEYIKSNVVNTDCPVCNHDIFPLSENLPFAHHIQSSLFENPVMLPNGNIYDSEKLISLSRKLNKMGYTKLKENQVMDPIDKSIYATTDFIKMYPT</sequence>
<reference key="1">
    <citation type="journal article" date="2004" name="Nature">
        <title>Genome evolution in yeasts.</title>
        <authorList>
            <person name="Dujon B."/>
            <person name="Sherman D."/>
            <person name="Fischer G."/>
            <person name="Durrens P."/>
            <person name="Casaregola S."/>
            <person name="Lafontaine I."/>
            <person name="de Montigny J."/>
            <person name="Marck C."/>
            <person name="Neuveglise C."/>
            <person name="Talla E."/>
            <person name="Goffard N."/>
            <person name="Frangeul L."/>
            <person name="Aigle M."/>
            <person name="Anthouard V."/>
            <person name="Babour A."/>
            <person name="Barbe V."/>
            <person name="Barnay S."/>
            <person name="Blanchin S."/>
            <person name="Beckerich J.-M."/>
            <person name="Beyne E."/>
            <person name="Bleykasten C."/>
            <person name="Boisrame A."/>
            <person name="Boyer J."/>
            <person name="Cattolico L."/>
            <person name="Confanioleri F."/>
            <person name="de Daruvar A."/>
            <person name="Despons L."/>
            <person name="Fabre E."/>
            <person name="Fairhead C."/>
            <person name="Ferry-Dumazet H."/>
            <person name="Groppi A."/>
            <person name="Hantraye F."/>
            <person name="Hennequin C."/>
            <person name="Jauniaux N."/>
            <person name="Joyet P."/>
            <person name="Kachouri R."/>
            <person name="Kerrest A."/>
            <person name="Koszul R."/>
            <person name="Lemaire M."/>
            <person name="Lesur I."/>
            <person name="Ma L."/>
            <person name="Muller H."/>
            <person name="Nicaud J.-M."/>
            <person name="Nikolski M."/>
            <person name="Oztas S."/>
            <person name="Ozier-Kalogeropoulos O."/>
            <person name="Pellenz S."/>
            <person name="Potier S."/>
            <person name="Richard G.-F."/>
            <person name="Straub M.-L."/>
            <person name="Suleau A."/>
            <person name="Swennen D."/>
            <person name="Tekaia F."/>
            <person name="Wesolowski-Louvel M."/>
            <person name="Westhof E."/>
            <person name="Wirth B."/>
            <person name="Zeniou-Meyer M."/>
            <person name="Zivanovic Y."/>
            <person name="Bolotin-Fukuhara M."/>
            <person name="Thierry A."/>
            <person name="Bouchier C."/>
            <person name="Caudron B."/>
            <person name="Scarpelli C."/>
            <person name="Gaillardin C."/>
            <person name="Weissenbach J."/>
            <person name="Wincker P."/>
            <person name="Souciet J.-L."/>
        </authorList>
    </citation>
    <scope>NUCLEOTIDE SEQUENCE [LARGE SCALE GENOMIC DNA]</scope>
    <source>
        <strain>ATCC 8585 / CBS 2359 / DSM 70799 / NBRC 1267 / NRRL Y-1140 / WM37</strain>
    </source>
</reference>